<protein>
    <recommendedName>
        <fullName evidence="1">Acid shock protein</fullName>
    </recommendedName>
</protein>
<proteinExistence type="inferred from homology"/>
<organism>
    <name type="scientific">Yersinia pseudotuberculosis serotype I (strain IP32953)</name>
    <dbReference type="NCBI Taxonomy" id="273123"/>
    <lineage>
        <taxon>Bacteria</taxon>
        <taxon>Pseudomonadati</taxon>
        <taxon>Pseudomonadota</taxon>
        <taxon>Gammaproteobacteria</taxon>
        <taxon>Enterobacterales</taxon>
        <taxon>Yersiniaceae</taxon>
        <taxon>Yersinia</taxon>
    </lineage>
</organism>
<evidence type="ECO:0000255" key="1">
    <source>
        <dbReference type="HAMAP-Rule" id="MF_00546"/>
    </source>
</evidence>
<evidence type="ECO:0000256" key="2">
    <source>
        <dbReference type="SAM" id="MobiDB-lite"/>
    </source>
</evidence>
<name>ASR_YERPS</name>
<sequence>MKKVLALMVAATLGLSSVAFAADTTATATPAATSTTATVAAQTKATQHQKHKVTKKTTEQKAQAAKKHEKKASVQKAPVQKAQAAKKHVKKASVQKAPVQKAQAAKKHHKTAKKPVAAPAA</sequence>
<comment type="function">
    <text evidence="1">Required for growth and/or survival at acidic conditions.</text>
</comment>
<comment type="subcellular location">
    <subcellularLocation>
        <location evidence="1">Periplasm</location>
    </subcellularLocation>
</comment>
<comment type="PTM">
    <text evidence="1">Proteolytic processing gives rise to the active protein.</text>
</comment>
<comment type="similarity">
    <text evidence="1">Belongs to the Asr family.</text>
</comment>
<gene>
    <name evidence="1" type="primary">asr</name>
    <name type="ordered locus">YPTB2954</name>
</gene>
<dbReference type="EMBL" id="BX936398">
    <property type="protein sequence ID" value="CAH22192.1"/>
    <property type="molecule type" value="Genomic_DNA"/>
</dbReference>
<dbReference type="RefSeq" id="WP_011192847.1">
    <property type="nucleotide sequence ID" value="NC_006155.1"/>
</dbReference>
<dbReference type="GeneID" id="49785034"/>
<dbReference type="KEGG" id="ypo:BZ17_3673"/>
<dbReference type="KEGG" id="yps:YPTB2954"/>
<dbReference type="PATRIC" id="fig|273123.14.peg.3848"/>
<dbReference type="Proteomes" id="UP000001011">
    <property type="component" value="Chromosome"/>
</dbReference>
<dbReference type="GO" id="GO:0042597">
    <property type="term" value="C:periplasmic space"/>
    <property type="evidence" value="ECO:0007669"/>
    <property type="project" value="UniProtKB-SubCell"/>
</dbReference>
<dbReference type="HAMAP" id="MF_00546">
    <property type="entry name" value="Asr"/>
    <property type="match status" value="1"/>
</dbReference>
<dbReference type="InterPro" id="IPR023497">
    <property type="entry name" value="Acid_shock"/>
</dbReference>
<dbReference type="NCBIfam" id="NF033636">
    <property type="entry name" value="acid_shock_Asr"/>
    <property type="match status" value="1"/>
</dbReference>
<dbReference type="Pfam" id="PF06392">
    <property type="entry name" value="Asr"/>
    <property type="match status" value="1"/>
</dbReference>
<keyword id="KW-0574">Periplasm</keyword>
<keyword id="KW-0732">Signal</keyword>
<reference key="1">
    <citation type="journal article" date="2004" name="Proc. Natl. Acad. Sci. U.S.A.">
        <title>Insights into the evolution of Yersinia pestis through whole-genome comparison with Yersinia pseudotuberculosis.</title>
        <authorList>
            <person name="Chain P.S.G."/>
            <person name="Carniel E."/>
            <person name="Larimer F.W."/>
            <person name="Lamerdin J."/>
            <person name="Stoutland P.O."/>
            <person name="Regala W.M."/>
            <person name="Georgescu A.M."/>
            <person name="Vergez L.M."/>
            <person name="Land M.L."/>
            <person name="Motin V.L."/>
            <person name="Brubaker R.R."/>
            <person name="Fowler J."/>
            <person name="Hinnebusch J."/>
            <person name="Marceau M."/>
            <person name="Medigue C."/>
            <person name="Simonet M."/>
            <person name="Chenal-Francisque V."/>
            <person name="Souza B."/>
            <person name="Dacheux D."/>
            <person name="Elliott J.M."/>
            <person name="Derbise A."/>
            <person name="Hauser L.J."/>
            <person name="Garcia E."/>
        </authorList>
    </citation>
    <scope>NUCLEOTIDE SEQUENCE [LARGE SCALE GENOMIC DNA]</scope>
    <source>
        <strain>IP32953</strain>
    </source>
</reference>
<accession>Q667N8</accession>
<feature type="signal peptide" evidence="1">
    <location>
        <begin position="1"/>
        <end position="21"/>
    </location>
</feature>
<feature type="propeptide" id="PRO_0000316048" evidence="1">
    <location>
        <begin position="22"/>
        <end position="63"/>
    </location>
</feature>
<feature type="chain" id="PRO_1000017756" description="Acid shock protein">
    <location>
        <begin position="64"/>
        <end position="121"/>
    </location>
</feature>
<feature type="region of interest" description="Disordered" evidence="2">
    <location>
        <begin position="40"/>
        <end position="121"/>
    </location>
</feature>
<feature type="compositionally biased region" description="Low complexity" evidence="2">
    <location>
        <begin position="74"/>
        <end position="83"/>
    </location>
</feature>
<feature type="compositionally biased region" description="Basic residues" evidence="2">
    <location>
        <begin position="84"/>
        <end position="93"/>
    </location>
</feature>
<feature type="compositionally biased region" description="Low complexity" evidence="2">
    <location>
        <begin position="94"/>
        <end position="103"/>
    </location>
</feature>
<feature type="compositionally biased region" description="Basic residues" evidence="2">
    <location>
        <begin position="104"/>
        <end position="113"/>
    </location>
</feature>